<keyword id="KW-0963">Cytoplasm</keyword>
<keyword id="KW-0378">Hydrolase</keyword>
<keyword id="KW-0520">NAD</keyword>
<keyword id="KW-0554">One-carbon metabolism</keyword>
<keyword id="KW-1185">Reference proteome</keyword>
<reference key="1">
    <citation type="journal article" date="2006" name="J. Bacteriol.">
        <title>Comparative genomic evidence for a close relationship between the dimorphic prosthecate bacteria Hyphomonas neptunium and Caulobacter crescentus.</title>
        <authorList>
            <person name="Badger J.H."/>
            <person name="Hoover T.R."/>
            <person name="Brun Y.V."/>
            <person name="Weiner R.M."/>
            <person name="Laub M.T."/>
            <person name="Alexandre G."/>
            <person name="Mrazek J."/>
            <person name="Ren Q."/>
            <person name="Paulsen I.T."/>
            <person name="Nelson K.E."/>
            <person name="Khouri H.M."/>
            <person name="Radune D."/>
            <person name="Sosa J."/>
            <person name="Dodson R.J."/>
            <person name="Sullivan S.A."/>
            <person name="Rosovitz M.J."/>
            <person name="Madupu R."/>
            <person name="Brinkac L.M."/>
            <person name="Durkin A.S."/>
            <person name="Daugherty S.C."/>
            <person name="Kothari S.P."/>
            <person name="Giglio M.G."/>
            <person name="Zhou L."/>
            <person name="Haft D.H."/>
            <person name="Selengut J.D."/>
            <person name="Davidsen T.M."/>
            <person name="Yang Q."/>
            <person name="Zafar N."/>
            <person name="Ward N.L."/>
        </authorList>
    </citation>
    <scope>NUCLEOTIDE SEQUENCE [LARGE SCALE GENOMIC DNA]</scope>
    <source>
        <strain>ATCC 15444</strain>
    </source>
</reference>
<accession>Q0C427</accession>
<dbReference type="EC" id="3.13.2.1" evidence="1"/>
<dbReference type="EMBL" id="CP000158">
    <property type="protein sequence ID" value="ABI76706.1"/>
    <property type="molecule type" value="Genomic_DNA"/>
</dbReference>
<dbReference type="RefSeq" id="WP_011645816.1">
    <property type="nucleotide sequence ID" value="NC_008358.1"/>
</dbReference>
<dbReference type="SMR" id="Q0C427"/>
<dbReference type="STRING" id="228405.HNE_0788"/>
<dbReference type="KEGG" id="hne:HNE_0788"/>
<dbReference type="eggNOG" id="COG0499">
    <property type="taxonomic scope" value="Bacteria"/>
</dbReference>
<dbReference type="HOGENOM" id="CLU_025194_2_1_5"/>
<dbReference type="UniPathway" id="UPA00314">
    <property type="reaction ID" value="UER00076"/>
</dbReference>
<dbReference type="Proteomes" id="UP000001959">
    <property type="component" value="Chromosome"/>
</dbReference>
<dbReference type="GO" id="GO:0005829">
    <property type="term" value="C:cytosol"/>
    <property type="evidence" value="ECO:0007669"/>
    <property type="project" value="TreeGrafter"/>
</dbReference>
<dbReference type="GO" id="GO:0004013">
    <property type="term" value="F:adenosylhomocysteinase activity"/>
    <property type="evidence" value="ECO:0007669"/>
    <property type="project" value="UniProtKB-UniRule"/>
</dbReference>
<dbReference type="GO" id="GO:0071269">
    <property type="term" value="P:L-homocysteine biosynthetic process"/>
    <property type="evidence" value="ECO:0007669"/>
    <property type="project" value="UniProtKB-UniRule"/>
</dbReference>
<dbReference type="GO" id="GO:0006730">
    <property type="term" value="P:one-carbon metabolic process"/>
    <property type="evidence" value="ECO:0007669"/>
    <property type="project" value="UniProtKB-KW"/>
</dbReference>
<dbReference type="GO" id="GO:0033353">
    <property type="term" value="P:S-adenosylmethionine cycle"/>
    <property type="evidence" value="ECO:0007669"/>
    <property type="project" value="TreeGrafter"/>
</dbReference>
<dbReference type="CDD" id="cd00401">
    <property type="entry name" value="SAHH"/>
    <property type="match status" value="1"/>
</dbReference>
<dbReference type="FunFam" id="3.40.50.720:FF:000004">
    <property type="entry name" value="Adenosylhomocysteinase"/>
    <property type="match status" value="1"/>
</dbReference>
<dbReference type="Gene3D" id="3.40.50.1480">
    <property type="entry name" value="Adenosylhomocysteinase-like"/>
    <property type="match status" value="1"/>
</dbReference>
<dbReference type="Gene3D" id="3.40.50.720">
    <property type="entry name" value="NAD(P)-binding Rossmann-like Domain"/>
    <property type="match status" value="1"/>
</dbReference>
<dbReference type="HAMAP" id="MF_00563">
    <property type="entry name" value="AdoHcyase"/>
    <property type="match status" value="1"/>
</dbReference>
<dbReference type="InterPro" id="IPR042172">
    <property type="entry name" value="Adenosylhomocyst_ase-like_sf"/>
</dbReference>
<dbReference type="InterPro" id="IPR000043">
    <property type="entry name" value="Adenosylhomocysteinase-like"/>
</dbReference>
<dbReference type="InterPro" id="IPR015878">
    <property type="entry name" value="Ado_hCys_hydrolase_NAD-bd"/>
</dbReference>
<dbReference type="InterPro" id="IPR036291">
    <property type="entry name" value="NAD(P)-bd_dom_sf"/>
</dbReference>
<dbReference type="InterPro" id="IPR020082">
    <property type="entry name" value="S-Ado-L-homoCys_hydrolase_CS"/>
</dbReference>
<dbReference type="NCBIfam" id="TIGR00936">
    <property type="entry name" value="ahcY"/>
    <property type="match status" value="1"/>
</dbReference>
<dbReference type="NCBIfam" id="NF004005">
    <property type="entry name" value="PRK05476.2-3"/>
    <property type="match status" value="1"/>
</dbReference>
<dbReference type="PANTHER" id="PTHR23420">
    <property type="entry name" value="ADENOSYLHOMOCYSTEINASE"/>
    <property type="match status" value="1"/>
</dbReference>
<dbReference type="PANTHER" id="PTHR23420:SF0">
    <property type="entry name" value="ADENOSYLHOMOCYSTEINASE"/>
    <property type="match status" value="1"/>
</dbReference>
<dbReference type="Pfam" id="PF05221">
    <property type="entry name" value="AdoHcyase"/>
    <property type="match status" value="1"/>
</dbReference>
<dbReference type="Pfam" id="PF00670">
    <property type="entry name" value="AdoHcyase_NAD"/>
    <property type="match status" value="1"/>
</dbReference>
<dbReference type="PIRSF" id="PIRSF001109">
    <property type="entry name" value="Ad_hcy_hydrolase"/>
    <property type="match status" value="1"/>
</dbReference>
<dbReference type="SMART" id="SM00996">
    <property type="entry name" value="AdoHcyase"/>
    <property type="match status" value="1"/>
</dbReference>
<dbReference type="SMART" id="SM00997">
    <property type="entry name" value="AdoHcyase_NAD"/>
    <property type="match status" value="1"/>
</dbReference>
<dbReference type="SUPFAM" id="SSF52283">
    <property type="entry name" value="Formate/glycerate dehydrogenase catalytic domain-like"/>
    <property type="match status" value="1"/>
</dbReference>
<dbReference type="SUPFAM" id="SSF51735">
    <property type="entry name" value="NAD(P)-binding Rossmann-fold domains"/>
    <property type="match status" value="1"/>
</dbReference>
<dbReference type="PROSITE" id="PS00738">
    <property type="entry name" value="ADOHCYASE_1"/>
    <property type="match status" value="1"/>
</dbReference>
<dbReference type="PROSITE" id="PS00739">
    <property type="entry name" value="ADOHCYASE_2"/>
    <property type="match status" value="1"/>
</dbReference>
<name>SAHH_HYPNA</name>
<proteinExistence type="inferred from homology"/>
<organism>
    <name type="scientific">Hyphomonas neptunium (strain ATCC 15444)</name>
    <dbReference type="NCBI Taxonomy" id="228405"/>
    <lineage>
        <taxon>Bacteria</taxon>
        <taxon>Pseudomonadati</taxon>
        <taxon>Pseudomonadota</taxon>
        <taxon>Alphaproteobacteria</taxon>
        <taxon>Hyphomonadales</taxon>
        <taxon>Hyphomonadaceae</taxon>
        <taxon>Hyphomonas</taxon>
    </lineage>
</organism>
<comment type="function">
    <text evidence="1">May play a key role in the regulation of the intracellular concentration of adenosylhomocysteine.</text>
</comment>
<comment type="catalytic activity">
    <reaction evidence="1">
        <text>S-adenosyl-L-homocysteine + H2O = L-homocysteine + adenosine</text>
        <dbReference type="Rhea" id="RHEA:21708"/>
        <dbReference type="ChEBI" id="CHEBI:15377"/>
        <dbReference type="ChEBI" id="CHEBI:16335"/>
        <dbReference type="ChEBI" id="CHEBI:57856"/>
        <dbReference type="ChEBI" id="CHEBI:58199"/>
        <dbReference type="EC" id="3.13.2.1"/>
    </reaction>
</comment>
<comment type="cofactor">
    <cofactor evidence="1">
        <name>NAD(+)</name>
        <dbReference type="ChEBI" id="CHEBI:57540"/>
    </cofactor>
    <text evidence="1">Binds 1 NAD(+) per subunit.</text>
</comment>
<comment type="pathway">
    <text evidence="1">Amino-acid biosynthesis; L-homocysteine biosynthesis; L-homocysteine from S-adenosyl-L-homocysteine: step 1/1.</text>
</comment>
<comment type="subcellular location">
    <subcellularLocation>
        <location evidence="1">Cytoplasm</location>
    </subcellularLocation>
</comment>
<comment type="similarity">
    <text evidence="1">Belongs to the adenosylhomocysteinase family.</text>
</comment>
<gene>
    <name evidence="1" type="primary">ahcY</name>
    <name type="ordered locus">HNE_0788</name>
</gene>
<feature type="chain" id="PRO_1000061126" description="Adenosylhomocysteinase">
    <location>
        <begin position="1"/>
        <end position="469"/>
    </location>
</feature>
<feature type="binding site" evidence="1">
    <location>
        <position position="60"/>
    </location>
    <ligand>
        <name>substrate</name>
    </ligand>
</feature>
<feature type="binding site" evidence="1">
    <location>
        <position position="135"/>
    </location>
    <ligand>
        <name>substrate</name>
    </ligand>
</feature>
<feature type="binding site" evidence="1">
    <location>
        <position position="195"/>
    </location>
    <ligand>
        <name>substrate</name>
    </ligand>
</feature>
<feature type="binding site" evidence="1">
    <location>
        <begin position="196"/>
        <end position="198"/>
    </location>
    <ligand>
        <name>NAD(+)</name>
        <dbReference type="ChEBI" id="CHEBI:57540"/>
    </ligand>
</feature>
<feature type="binding site" evidence="1">
    <location>
        <position position="225"/>
    </location>
    <ligand>
        <name>substrate</name>
    </ligand>
</feature>
<feature type="binding site" evidence="1">
    <location>
        <position position="229"/>
    </location>
    <ligand>
        <name>substrate</name>
    </ligand>
</feature>
<feature type="binding site" evidence="1">
    <location>
        <position position="230"/>
    </location>
    <ligand>
        <name>NAD(+)</name>
        <dbReference type="ChEBI" id="CHEBI:57540"/>
    </ligand>
</feature>
<feature type="binding site" evidence="1">
    <location>
        <begin position="259"/>
        <end position="264"/>
    </location>
    <ligand>
        <name>NAD(+)</name>
        <dbReference type="ChEBI" id="CHEBI:57540"/>
    </ligand>
</feature>
<feature type="binding site" evidence="1">
    <location>
        <position position="282"/>
    </location>
    <ligand>
        <name>NAD(+)</name>
        <dbReference type="ChEBI" id="CHEBI:57540"/>
    </ligand>
</feature>
<feature type="binding site" evidence="1">
    <location>
        <position position="317"/>
    </location>
    <ligand>
        <name>NAD(+)</name>
        <dbReference type="ChEBI" id="CHEBI:57540"/>
    </ligand>
</feature>
<feature type="binding site" evidence="1">
    <location>
        <begin position="338"/>
        <end position="340"/>
    </location>
    <ligand>
        <name>NAD(+)</name>
        <dbReference type="ChEBI" id="CHEBI:57540"/>
    </ligand>
</feature>
<feature type="binding site" evidence="1">
    <location>
        <position position="383"/>
    </location>
    <ligand>
        <name>NAD(+)</name>
        <dbReference type="ChEBI" id="CHEBI:57540"/>
    </ligand>
</feature>
<protein>
    <recommendedName>
        <fullName evidence="1">Adenosylhomocysteinase</fullName>
        <ecNumber evidence="1">3.13.2.1</ecNumber>
    </recommendedName>
    <alternativeName>
        <fullName evidence="1">S-adenosyl-L-homocysteine hydrolase</fullName>
        <shortName evidence="1">AdoHcyase</shortName>
    </alternativeName>
</protein>
<sequence length="469" mass="51572">MSAKAAPQDYFVKDISLAEYGRKEIAIAETEMPGLMAAREEFGPSQPLKGARICGSLHMTIQTAVLIQTLEALGAQVRWVSCNIYSTQDHAAAAIADAGTAVFAYKGETLEEYWDYTDRMFQWPDGEGPNLILDDGGDATMYLILGEKAESDPSFLEKPTSEEEKYFFAQIKKRLTASPGWFKKTKAGVRGVSEETTTGVNRLYQLEKRGELPFPAINVNDSVTKSKFDNKYGCKESLVDAIRRGTDVMMAGKKAFVAGYGDVGKGSAASLAGSGARVGVSEVDPICALQAAMDGFEVLTMDEAAPKFDIFVTATGNKDILTVDHMRAMKDMAIVCNIGHFDNEIQVEGLRNFQWTNIKPQVDMITFPDGKRIILLSEGRLVNLGNATGHPSFVMSASFTNQTLAQIELHLRGNEYDNKVYTLPKHLDEKVARLHLDKLGVQLTKLSGEQAAYIGVEQTGPFKPEHYRY</sequence>
<evidence type="ECO:0000255" key="1">
    <source>
        <dbReference type="HAMAP-Rule" id="MF_00563"/>
    </source>
</evidence>